<sequence>MADNLLSEQLLQRLQDGDNKGVDTLELAAVLSVDHQQVVGAVKSLQCLGEIIEAEQRSSKKWELSSEGEEIAQVGSHEARVFQSLPKEGLLQAELMKLPFAKVGFSKAMSNKWIRLDKAAAGGPCVYRVVETIEDTVKEKLQLILKGRADDVNEKDKNELKKRKLVNEVTVKSYWVTKGSGFSTSITKQETDLTPEMIASGSWREKQFKGYNFNALGVMPECGHLHPLLKVRTQFRQIFLEMGFTEMPTNNFIESSFWNFDALFQPQQHPARDQHDTFFLQDPALATEFPMEYLERVKKVHSEGGYGSQGYKYDWSIHEAQKNILRTHTTAVSARMLYKLAHQKEFTPVKYFSIDRVFRNETLDATHLAEFHQIEGVVADRGLTLGNLMGVLKEFFHKLGITKLRFKPAYNPYTEPSMEVFSYHEGLKKWVEVGNSGLFRPELLLPMGLPGDVNVLGWGLSLERPTMIRYGIKNIRELVGHKVNLQMVYDSPICRLDAC</sequence>
<evidence type="ECO:0000250" key="1"/>
<evidence type="ECO:0000250" key="2">
    <source>
        <dbReference type="UniProtKB" id="A5K9S0"/>
    </source>
</evidence>
<evidence type="ECO:0000250" key="3">
    <source>
        <dbReference type="UniProtKB" id="Q505J8"/>
    </source>
</evidence>
<evidence type="ECO:0000250" key="4">
    <source>
        <dbReference type="UniProtKB" id="Q9Y285"/>
    </source>
</evidence>
<evidence type="ECO:0000305" key="5"/>
<organism>
    <name type="scientific">Xenopus laevis</name>
    <name type="common">African clawed frog</name>
    <dbReference type="NCBI Taxonomy" id="8355"/>
    <lineage>
        <taxon>Eukaryota</taxon>
        <taxon>Metazoa</taxon>
        <taxon>Chordata</taxon>
        <taxon>Craniata</taxon>
        <taxon>Vertebrata</taxon>
        <taxon>Euteleostomi</taxon>
        <taxon>Amphibia</taxon>
        <taxon>Batrachia</taxon>
        <taxon>Anura</taxon>
        <taxon>Pipoidea</taxon>
        <taxon>Pipidae</taxon>
        <taxon>Xenopodinae</taxon>
        <taxon>Xenopus</taxon>
        <taxon>Xenopus</taxon>
    </lineage>
</organism>
<comment type="catalytic activity">
    <reaction evidence="4">
        <text>tRNA(Phe) + L-phenylalanine + ATP = L-phenylalanyl-tRNA(Phe) + AMP + diphosphate + H(+)</text>
        <dbReference type="Rhea" id="RHEA:19413"/>
        <dbReference type="Rhea" id="RHEA-COMP:9668"/>
        <dbReference type="Rhea" id="RHEA-COMP:9699"/>
        <dbReference type="ChEBI" id="CHEBI:15378"/>
        <dbReference type="ChEBI" id="CHEBI:30616"/>
        <dbReference type="ChEBI" id="CHEBI:33019"/>
        <dbReference type="ChEBI" id="CHEBI:58095"/>
        <dbReference type="ChEBI" id="CHEBI:78442"/>
        <dbReference type="ChEBI" id="CHEBI:78531"/>
        <dbReference type="ChEBI" id="CHEBI:456215"/>
        <dbReference type="EC" id="6.1.1.20"/>
    </reaction>
</comment>
<comment type="cofactor">
    <cofactor evidence="2">
        <name>Mg(2+)</name>
        <dbReference type="ChEBI" id="CHEBI:18420"/>
    </cofactor>
</comment>
<comment type="subunit">
    <text evidence="4">Heterotetramer; dimer of two heterodimers formed by alpha and beta subunits.</text>
</comment>
<comment type="subcellular location">
    <subcellularLocation>
        <location evidence="3">Cytoplasm</location>
    </subcellularLocation>
</comment>
<comment type="similarity">
    <text evidence="5">Belongs to the class-II aminoacyl-tRNA synthetase family. Phe-tRNA synthetase alpha subunit type 2 subfamily.</text>
</comment>
<keyword id="KW-0030">Aminoacyl-tRNA synthetase</keyword>
<keyword id="KW-0067">ATP-binding</keyword>
<keyword id="KW-0963">Cytoplasm</keyword>
<keyword id="KW-0436">Ligase</keyword>
<keyword id="KW-0460">Magnesium</keyword>
<keyword id="KW-0479">Metal-binding</keyword>
<keyword id="KW-0547">Nucleotide-binding</keyword>
<keyword id="KW-0648">Protein biosynthesis</keyword>
<keyword id="KW-1185">Reference proteome</keyword>
<protein>
    <recommendedName>
        <fullName>Phenylalanine--tRNA ligase alpha subunit B</fullName>
        <ecNumber evidence="4">6.1.1.20</ecNumber>
    </recommendedName>
    <alternativeName>
        <fullName>Phenylalanyl-tRNA synthetase alpha subunit B</fullName>
        <shortName>PheRS</shortName>
    </alternativeName>
</protein>
<feature type="initiator methionine" description="Removed" evidence="1">
    <location>
        <position position="1"/>
    </location>
</feature>
<feature type="chain" id="PRO_0000280453" description="Phenylalanine--tRNA ligase alpha subunit B">
    <location>
        <begin position="2"/>
        <end position="499"/>
    </location>
</feature>
<feature type="binding site" evidence="4">
    <location>
        <position position="330"/>
    </location>
    <ligand>
        <name>L-phenylalanine</name>
        <dbReference type="ChEBI" id="CHEBI:58095"/>
    </ligand>
</feature>
<feature type="binding site" evidence="4">
    <location>
        <begin position="373"/>
        <end position="375"/>
    </location>
    <ligand>
        <name>L-phenylalanine</name>
        <dbReference type="ChEBI" id="CHEBI:58095"/>
    </ligand>
</feature>
<feature type="binding site" evidence="4">
    <location>
        <position position="413"/>
    </location>
    <ligand>
        <name>L-phenylalanine</name>
        <dbReference type="ChEBI" id="CHEBI:58095"/>
    </ligand>
</feature>
<feature type="binding site" evidence="2">
    <location>
        <position position="415"/>
    </location>
    <ligand>
        <name>Mg(2+)</name>
        <dbReference type="ChEBI" id="CHEBI:18420"/>
        <note>ligand shared with heterodimeric partner</note>
    </ligand>
</feature>
<feature type="binding site" evidence="4">
    <location>
        <position position="439"/>
    </location>
    <ligand>
        <name>L-phenylalanine</name>
        <dbReference type="ChEBI" id="CHEBI:58095"/>
    </ligand>
</feature>
<name>SYFAB_XENLA</name>
<dbReference type="EC" id="6.1.1.20" evidence="4"/>
<dbReference type="EMBL" id="BC054256">
    <property type="protein sequence ID" value="AAH54256.1"/>
    <property type="molecule type" value="mRNA"/>
</dbReference>
<dbReference type="RefSeq" id="NP_001080851.1">
    <property type="nucleotide sequence ID" value="NM_001087382.2"/>
</dbReference>
<dbReference type="SMR" id="Q7SYV0"/>
<dbReference type="BioGRID" id="98787">
    <property type="interactions" value="1"/>
</dbReference>
<dbReference type="IntAct" id="Q7SYV0">
    <property type="interactions" value="1"/>
</dbReference>
<dbReference type="DNASU" id="380545"/>
<dbReference type="GeneID" id="380545"/>
<dbReference type="KEGG" id="xla:380545"/>
<dbReference type="AGR" id="Xenbase:XB-GENE-6253419"/>
<dbReference type="CTD" id="380545"/>
<dbReference type="Xenbase" id="XB-GENE-6253419">
    <property type="gene designation" value="farsa.L"/>
</dbReference>
<dbReference type="OrthoDB" id="238316at2759"/>
<dbReference type="Proteomes" id="UP000186698">
    <property type="component" value="Chromosome 3L"/>
</dbReference>
<dbReference type="Bgee" id="380545">
    <property type="expression patterns" value="Expressed in liver and 19 other cell types or tissues"/>
</dbReference>
<dbReference type="GO" id="GO:0005737">
    <property type="term" value="C:cytoplasm"/>
    <property type="evidence" value="ECO:0000250"/>
    <property type="project" value="UniProtKB"/>
</dbReference>
<dbReference type="GO" id="GO:0005829">
    <property type="term" value="C:cytosol"/>
    <property type="evidence" value="ECO:0007669"/>
    <property type="project" value="TreeGrafter"/>
</dbReference>
<dbReference type="GO" id="GO:0009328">
    <property type="term" value="C:phenylalanine-tRNA ligase complex"/>
    <property type="evidence" value="ECO:0000250"/>
    <property type="project" value="UniProtKB"/>
</dbReference>
<dbReference type="GO" id="GO:0005524">
    <property type="term" value="F:ATP binding"/>
    <property type="evidence" value="ECO:0007669"/>
    <property type="project" value="UniProtKB-KW"/>
</dbReference>
<dbReference type="GO" id="GO:0000287">
    <property type="term" value="F:magnesium ion binding"/>
    <property type="evidence" value="ECO:0000250"/>
    <property type="project" value="UniProtKB"/>
</dbReference>
<dbReference type="GO" id="GO:0004826">
    <property type="term" value="F:phenylalanine-tRNA ligase activity"/>
    <property type="evidence" value="ECO:0000250"/>
    <property type="project" value="UniProtKB"/>
</dbReference>
<dbReference type="GO" id="GO:0000049">
    <property type="term" value="F:tRNA binding"/>
    <property type="evidence" value="ECO:0007669"/>
    <property type="project" value="InterPro"/>
</dbReference>
<dbReference type="GO" id="GO:0006432">
    <property type="term" value="P:phenylalanyl-tRNA aminoacylation"/>
    <property type="evidence" value="ECO:0000250"/>
    <property type="project" value="UniProtKB"/>
</dbReference>
<dbReference type="GO" id="GO:0051290">
    <property type="term" value="P:protein heterotetramerization"/>
    <property type="evidence" value="ECO:0000250"/>
    <property type="project" value="UniProtKB"/>
</dbReference>
<dbReference type="CDD" id="cd00496">
    <property type="entry name" value="PheRS_alpha_core"/>
    <property type="match status" value="1"/>
</dbReference>
<dbReference type="FunFam" id="1.10.10.2320:FF:000001">
    <property type="entry name" value="phenylalanine--tRNA ligase alpha subunit"/>
    <property type="match status" value="1"/>
</dbReference>
<dbReference type="FunFam" id="1.10.10.2330:FF:000001">
    <property type="entry name" value="phenylalanine--tRNA ligase alpha subunit"/>
    <property type="match status" value="1"/>
</dbReference>
<dbReference type="FunFam" id="3.30.930.10:FF:000036">
    <property type="entry name" value="phenylalanine--tRNA ligase alpha subunit"/>
    <property type="match status" value="1"/>
</dbReference>
<dbReference type="Gene3D" id="1.10.10.2320">
    <property type="match status" value="1"/>
</dbReference>
<dbReference type="Gene3D" id="1.10.10.2330">
    <property type="match status" value="1"/>
</dbReference>
<dbReference type="Gene3D" id="3.30.1370.240">
    <property type="match status" value="1"/>
</dbReference>
<dbReference type="Gene3D" id="3.30.930.10">
    <property type="entry name" value="Bira Bifunctional Protein, Domain 2"/>
    <property type="match status" value="1"/>
</dbReference>
<dbReference type="InterPro" id="IPR006195">
    <property type="entry name" value="aa-tRNA-synth_II"/>
</dbReference>
<dbReference type="InterPro" id="IPR045864">
    <property type="entry name" value="aa-tRNA-synth_II/BPL/LPL"/>
</dbReference>
<dbReference type="InterPro" id="IPR004529">
    <property type="entry name" value="Phe-tRNA-synth_IIc_asu"/>
</dbReference>
<dbReference type="InterPro" id="IPR002319">
    <property type="entry name" value="Phenylalanyl-tRNA_Synthase"/>
</dbReference>
<dbReference type="InterPro" id="IPR040724">
    <property type="entry name" value="PheRS_DBD1"/>
</dbReference>
<dbReference type="InterPro" id="IPR040586">
    <property type="entry name" value="PheRS_DBD2"/>
</dbReference>
<dbReference type="InterPro" id="IPR040725">
    <property type="entry name" value="PheRS_DBD3"/>
</dbReference>
<dbReference type="NCBIfam" id="TIGR00468">
    <property type="entry name" value="pheS"/>
    <property type="match status" value="1"/>
</dbReference>
<dbReference type="NCBIfam" id="NF003210">
    <property type="entry name" value="PRK04172.1"/>
    <property type="match status" value="1"/>
</dbReference>
<dbReference type="PANTHER" id="PTHR11538:SF40">
    <property type="entry name" value="PHENYLALANINE--TRNA LIGASE ALPHA SUBUNIT"/>
    <property type="match status" value="1"/>
</dbReference>
<dbReference type="PANTHER" id="PTHR11538">
    <property type="entry name" value="PHENYLALANYL-TRNA SYNTHETASE"/>
    <property type="match status" value="1"/>
</dbReference>
<dbReference type="Pfam" id="PF18552">
    <property type="entry name" value="PheRS_DBD1"/>
    <property type="match status" value="1"/>
</dbReference>
<dbReference type="Pfam" id="PF18554">
    <property type="entry name" value="PheRS_DBD2"/>
    <property type="match status" value="1"/>
</dbReference>
<dbReference type="Pfam" id="PF18553">
    <property type="entry name" value="PheRS_DBD3"/>
    <property type="match status" value="1"/>
</dbReference>
<dbReference type="Pfam" id="PF01409">
    <property type="entry name" value="tRNA-synt_2d"/>
    <property type="match status" value="1"/>
</dbReference>
<dbReference type="SUPFAM" id="SSF55681">
    <property type="entry name" value="Class II aaRS and biotin synthetases"/>
    <property type="match status" value="1"/>
</dbReference>
<dbReference type="PROSITE" id="PS50862">
    <property type="entry name" value="AA_TRNA_LIGASE_II"/>
    <property type="match status" value="1"/>
</dbReference>
<proteinExistence type="evidence at transcript level"/>
<accession>Q7SYV0</accession>
<gene>
    <name type="primary">farsa-b</name>
    <name type="synonym">farsla-b</name>
</gene>
<reference key="1">
    <citation type="submission" date="2003-06" db="EMBL/GenBank/DDBJ databases">
        <authorList>
            <consortium name="NIH - Xenopus Gene Collection (XGC) project"/>
        </authorList>
    </citation>
    <scope>NUCLEOTIDE SEQUENCE [LARGE SCALE MRNA]</scope>
</reference>